<organism>
    <name type="scientific">Cryptococcus neoformans var. neoformans serotype D (strain JEC21 / ATCC MYA-565)</name>
    <name type="common">Filobasidiella neoformans</name>
    <dbReference type="NCBI Taxonomy" id="214684"/>
    <lineage>
        <taxon>Eukaryota</taxon>
        <taxon>Fungi</taxon>
        <taxon>Dikarya</taxon>
        <taxon>Basidiomycota</taxon>
        <taxon>Agaricomycotina</taxon>
        <taxon>Tremellomycetes</taxon>
        <taxon>Tremellales</taxon>
        <taxon>Cryptococcaceae</taxon>
        <taxon>Cryptococcus</taxon>
        <taxon>Cryptococcus neoformans species complex</taxon>
    </lineage>
</organism>
<proteinExistence type="inferred from homology"/>
<protein>
    <recommendedName>
        <fullName>rRNA-processing protein CGR1</fullName>
    </recommendedName>
</protein>
<sequence length="127" mass="14530">MSAEPSSSAQASAPTVVSVAPSKNGRTPGKAHKSAKTALRRSYISPSVKTPFEKRMEKEKAQQAAKQLEKELKEEKENERQRKVNIIKERRARKEEKQREEELRAKMSAKKLQRMKKREGRSKKING</sequence>
<accession>P0CM66</accession>
<accession>Q55SP5</accession>
<accession>Q5KH33</accession>
<reference key="1">
    <citation type="journal article" date="2005" name="Science">
        <title>The genome of the basidiomycetous yeast and human pathogen Cryptococcus neoformans.</title>
        <authorList>
            <person name="Loftus B.J."/>
            <person name="Fung E."/>
            <person name="Roncaglia P."/>
            <person name="Rowley D."/>
            <person name="Amedeo P."/>
            <person name="Bruno D."/>
            <person name="Vamathevan J."/>
            <person name="Miranda M."/>
            <person name="Anderson I.J."/>
            <person name="Fraser J.A."/>
            <person name="Allen J.E."/>
            <person name="Bosdet I.E."/>
            <person name="Brent M.R."/>
            <person name="Chiu R."/>
            <person name="Doering T.L."/>
            <person name="Donlin M.J."/>
            <person name="D'Souza C.A."/>
            <person name="Fox D.S."/>
            <person name="Grinberg V."/>
            <person name="Fu J."/>
            <person name="Fukushima M."/>
            <person name="Haas B.J."/>
            <person name="Huang J.C."/>
            <person name="Janbon G."/>
            <person name="Jones S.J.M."/>
            <person name="Koo H.L."/>
            <person name="Krzywinski M.I."/>
            <person name="Kwon-Chung K.J."/>
            <person name="Lengeler K.B."/>
            <person name="Maiti R."/>
            <person name="Marra M.A."/>
            <person name="Marra R.E."/>
            <person name="Mathewson C.A."/>
            <person name="Mitchell T.G."/>
            <person name="Pertea M."/>
            <person name="Riggs F.R."/>
            <person name="Salzberg S.L."/>
            <person name="Schein J.E."/>
            <person name="Shvartsbeyn A."/>
            <person name="Shin H."/>
            <person name="Shumway M."/>
            <person name="Specht C.A."/>
            <person name="Suh B.B."/>
            <person name="Tenney A."/>
            <person name="Utterback T.R."/>
            <person name="Wickes B.L."/>
            <person name="Wortman J.R."/>
            <person name="Wye N.H."/>
            <person name="Kronstad J.W."/>
            <person name="Lodge J.K."/>
            <person name="Heitman J."/>
            <person name="Davis R.W."/>
            <person name="Fraser C.M."/>
            <person name="Hyman R.W."/>
        </authorList>
    </citation>
    <scope>NUCLEOTIDE SEQUENCE [LARGE SCALE GENOMIC DNA]</scope>
    <source>
        <strain>JEC21 / ATCC MYA-565</strain>
    </source>
</reference>
<keyword id="KW-0175">Coiled coil</keyword>
<keyword id="KW-0539">Nucleus</keyword>
<keyword id="KW-1185">Reference proteome</keyword>
<keyword id="KW-0690">Ribosome biogenesis</keyword>
<keyword id="KW-0698">rRNA processing</keyword>
<feature type="chain" id="PRO_0000278953" description="rRNA-processing protein CGR1">
    <location>
        <begin position="1"/>
        <end position="127"/>
    </location>
</feature>
<feature type="region of interest" description="Disordered" evidence="3">
    <location>
        <begin position="1"/>
        <end position="127"/>
    </location>
</feature>
<feature type="coiled-coil region" evidence="2">
    <location>
        <begin position="52"/>
        <end position="114"/>
    </location>
</feature>
<feature type="compositionally biased region" description="Low complexity" evidence="3">
    <location>
        <begin position="1"/>
        <end position="22"/>
    </location>
</feature>
<feature type="compositionally biased region" description="Basic residues" evidence="3">
    <location>
        <begin position="29"/>
        <end position="39"/>
    </location>
</feature>
<feature type="compositionally biased region" description="Basic and acidic residues" evidence="3">
    <location>
        <begin position="51"/>
        <end position="105"/>
    </location>
</feature>
<feature type="compositionally biased region" description="Basic residues" evidence="3">
    <location>
        <begin position="107"/>
        <end position="127"/>
    </location>
</feature>
<comment type="function">
    <text evidence="1">Involved in nucleolar integrity and required for processing of the pre-rRNA for the 60S ribosome subunit.</text>
</comment>
<comment type="subcellular location">
    <subcellularLocation>
        <location evidence="1">Nucleus</location>
        <location evidence="1">Nucleolus</location>
    </subcellularLocation>
</comment>
<comment type="similarity">
    <text evidence="4">Belongs to the CGR1 family.</text>
</comment>
<name>CGR1_CRYNJ</name>
<evidence type="ECO:0000250" key="1"/>
<evidence type="ECO:0000255" key="2"/>
<evidence type="ECO:0000256" key="3">
    <source>
        <dbReference type="SAM" id="MobiDB-lite"/>
    </source>
</evidence>
<evidence type="ECO:0000305" key="4"/>
<gene>
    <name type="primary">CGR1</name>
    <name type="ordered locus">CNE01440</name>
</gene>
<dbReference type="EMBL" id="AE017345">
    <property type="protein sequence ID" value="AAW43439.1"/>
    <property type="molecule type" value="Genomic_DNA"/>
</dbReference>
<dbReference type="RefSeq" id="XP_570746.1">
    <property type="nucleotide sequence ID" value="XM_570746.1"/>
</dbReference>
<dbReference type="SMR" id="P0CM66"/>
<dbReference type="FunCoup" id="P0CM66">
    <property type="interactions" value="6"/>
</dbReference>
<dbReference type="PaxDb" id="214684-P0CM66"/>
<dbReference type="EnsemblFungi" id="AAW43439">
    <property type="protein sequence ID" value="AAW43439"/>
    <property type="gene ID" value="CNE01440"/>
</dbReference>
<dbReference type="GeneID" id="3257652"/>
<dbReference type="KEGG" id="cne:CNE01440"/>
<dbReference type="VEuPathDB" id="FungiDB:CNE01440"/>
<dbReference type="eggNOG" id="ENOG502SCS3">
    <property type="taxonomic scope" value="Eukaryota"/>
</dbReference>
<dbReference type="HOGENOM" id="CLU_125051_1_0_1"/>
<dbReference type="InParanoid" id="P0CM66"/>
<dbReference type="OMA" id="NGKQWHD"/>
<dbReference type="OrthoDB" id="277961at2759"/>
<dbReference type="Proteomes" id="UP000002149">
    <property type="component" value="Chromosome 5"/>
</dbReference>
<dbReference type="GO" id="GO:0005730">
    <property type="term" value="C:nucleolus"/>
    <property type="evidence" value="ECO:0007669"/>
    <property type="project" value="UniProtKB-SubCell"/>
</dbReference>
<dbReference type="GO" id="GO:0006364">
    <property type="term" value="P:rRNA processing"/>
    <property type="evidence" value="ECO:0007669"/>
    <property type="project" value="UniProtKB-KW"/>
</dbReference>
<dbReference type="InterPro" id="IPR005579">
    <property type="entry name" value="Cgr1-like"/>
</dbReference>
<dbReference type="Pfam" id="PF03879">
    <property type="entry name" value="Cgr1"/>
    <property type="match status" value="1"/>
</dbReference>